<name>RS4_CHLCV</name>
<proteinExistence type="inferred from homology"/>
<comment type="function">
    <text evidence="1">One of the primary rRNA binding proteins, it binds directly to 16S rRNA where it nucleates assembly of the body of the 30S subunit.</text>
</comment>
<comment type="function">
    <text evidence="1">With S5 and S12 plays an important role in translational accuracy.</text>
</comment>
<comment type="subunit">
    <text evidence="1">Part of the 30S ribosomal subunit. Contacts protein S5. The interaction surface between S4 and S5 is involved in control of translational fidelity.</text>
</comment>
<comment type="similarity">
    <text evidence="1">Belongs to the universal ribosomal protein uS4 family.</text>
</comment>
<protein>
    <recommendedName>
        <fullName evidence="1">Small ribosomal subunit protein uS4</fullName>
    </recommendedName>
    <alternativeName>
        <fullName evidence="3">30S ribosomal protein S4</fullName>
    </alternativeName>
</protein>
<reference key="1">
    <citation type="journal article" date="2003" name="Nucleic Acids Res.">
        <title>Genome sequence of Chlamydophila caviae (Chlamydia psittaci GPIC): examining the role of niche-specific genes in the evolution of the Chlamydiaceae.</title>
        <authorList>
            <person name="Read T.D."/>
            <person name="Myers G.S.A."/>
            <person name="Brunham R.C."/>
            <person name="Nelson W.C."/>
            <person name="Paulsen I.T."/>
            <person name="Heidelberg J.F."/>
            <person name="Holtzapple E.K."/>
            <person name="Khouri H.M."/>
            <person name="Federova N.B."/>
            <person name="Carty H.A."/>
            <person name="Umayam L.A."/>
            <person name="Haft D.H."/>
            <person name="Peterson J.D."/>
            <person name="Beanan M.J."/>
            <person name="White O."/>
            <person name="Salzberg S.L."/>
            <person name="Hsia R.-C."/>
            <person name="McClarty G."/>
            <person name="Rank R.G."/>
            <person name="Bavoil P.M."/>
            <person name="Fraser C.M."/>
        </authorList>
    </citation>
    <scope>NUCLEOTIDE SEQUENCE [LARGE SCALE GENOMIC DNA]</scope>
    <source>
        <strain>ATCC VR-813 / DSM 19441 / 03DC25 / GPIC</strain>
    </source>
</reference>
<organism>
    <name type="scientific">Chlamydia caviae (strain ATCC VR-813 / DSM 19441 / 03DC25 / GPIC)</name>
    <name type="common">Chlamydophila caviae</name>
    <dbReference type="NCBI Taxonomy" id="227941"/>
    <lineage>
        <taxon>Bacteria</taxon>
        <taxon>Pseudomonadati</taxon>
        <taxon>Chlamydiota</taxon>
        <taxon>Chlamydiia</taxon>
        <taxon>Chlamydiales</taxon>
        <taxon>Chlamydiaceae</taxon>
        <taxon>Chlamydia/Chlamydophila group</taxon>
        <taxon>Chlamydia</taxon>
    </lineage>
</organism>
<dbReference type="EMBL" id="AE015925">
    <property type="protein sequence ID" value="AAP04764.1"/>
    <property type="molecule type" value="Genomic_DNA"/>
</dbReference>
<dbReference type="RefSeq" id="WP_011005985.1">
    <property type="nucleotide sequence ID" value="NC_003361.3"/>
</dbReference>
<dbReference type="SMR" id="Q824X7"/>
<dbReference type="STRING" id="227941.CCA_00011"/>
<dbReference type="KEGG" id="cca:CCA_00011"/>
<dbReference type="eggNOG" id="COG0522">
    <property type="taxonomic scope" value="Bacteria"/>
</dbReference>
<dbReference type="HOGENOM" id="CLU_092403_0_1_0"/>
<dbReference type="OrthoDB" id="9803672at2"/>
<dbReference type="Proteomes" id="UP000002193">
    <property type="component" value="Chromosome"/>
</dbReference>
<dbReference type="GO" id="GO:0015935">
    <property type="term" value="C:small ribosomal subunit"/>
    <property type="evidence" value="ECO:0007669"/>
    <property type="project" value="InterPro"/>
</dbReference>
<dbReference type="GO" id="GO:0019843">
    <property type="term" value="F:rRNA binding"/>
    <property type="evidence" value="ECO:0007669"/>
    <property type="project" value="UniProtKB-UniRule"/>
</dbReference>
<dbReference type="GO" id="GO:0003735">
    <property type="term" value="F:structural constituent of ribosome"/>
    <property type="evidence" value="ECO:0007669"/>
    <property type="project" value="InterPro"/>
</dbReference>
<dbReference type="GO" id="GO:0042274">
    <property type="term" value="P:ribosomal small subunit biogenesis"/>
    <property type="evidence" value="ECO:0007669"/>
    <property type="project" value="TreeGrafter"/>
</dbReference>
<dbReference type="GO" id="GO:0006412">
    <property type="term" value="P:translation"/>
    <property type="evidence" value="ECO:0007669"/>
    <property type="project" value="UniProtKB-UniRule"/>
</dbReference>
<dbReference type="CDD" id="cd00165">
    <property type="entry name" value="S4"/>
    <property type="match status" value="1"/>
</dbReference>
<dbReference type="FunFam" id="3.10.290.10:FF:000001">
    <property type="entry name" value="30S ribosomal protein S4"/>
    <property type="match status" value="1"/>
</dbReference>
<dbReference type="Gene3D" id="1.10.1050.10">
    <property type="entry name" value="Ribosomal Protein S4 Delta 41, Chain A, domain 1"/>
    <property type="match status" value="1"/>
</dbReference>
<dbReference type="Gene3D" id="3.10.290.10">
    <property type="entry name" value="RNA-binding S4 domain"/>
    <property type="match status" value="1"/>
</dbReference>
<dbReference type="HAMAP" id="MF_01306_B">
    <property type="entry name" value="Ribosomal_uS4_B"/>
    <property type="match status" value="1"/>
</dbReference>
<dbReference type="InterPro" id="IPR022801">
    <property type="entry name" value="Ribosomal_uS4"/>
</dbReference>
<dbReference type="InterPro" id="IPR005709">
    <property type="entry name" value="Ribosomal_uS4_bac-type"/>
</dbReference>
<dbReference type="InterPro" id="IPR001912">
    <property type="entry name" value="Ribosomal_uS4_N"/>
</dbReference>
<dbReference type="InterPro" id="IPR002942">
    <property type="entry name" value="S4_RNA-bd"/>
</dbReference>
<dbReference type="InterPro" id="IPR036986">
    <property type="entry name" value="S4_RNA-bd_sf"/>
</dbReference>
<dbReference type="NCBIfam" id="NF003717">
    <property type="entry name" value="PRK05327.1"/>
    <property type="match status" value="1"/>
</dbReference>
<dbReference type="NCBIfam" id="TIGR01017">
    <property type="entry name" value="rpsD_bact"/>
    <property type="match status" value="1"/>
</dbReference>
<dbReference type="PANTHER" id="PTHR11831">
    <property type="entry name" value="30S 40S RIBOSOMAL PROTEIN"/>
    <property type="match status" value="1"/>
</dbReference>
<dbReference type="PANTHER" id="PTHR11831:SF4">
    <property type="entry name" value="SMALL RIBOSOMAL SUBUNIT PROTEIN US4M"/>
    <property type="match status" value="1"/>
</dbReference>
<dbReference type="Pfam" id="PF00163">
    <property type="entry name" value="Ribosomal_S4"/>
    <property type="match status" value="1"/>
</dbReference>
<dbReference type="Pfam" id="PF01479">
    <property type="entry name" value="S4"/>
    <property type="match status" value="1"/>
</dbReference>
<dbReference type="SMART" id="SM01390">
    <property type="entry name" value="Ribosomal_S4"/>
    <property type="match status" value="1"/>
</dbReference>
<dbReference type="SMART" id="SM00363">
    <property type="entry name" value="S4"/>
    <property type="match status" value="1"/>
</dbReference>
<dbReference type="SUPFAM" id="SSF55174">
    <property type="entry name" value="Alpha-L RNA-binding motif"/>
    <property type="match status" value="1"/>
</dbReference>
<dbReference type="PROSITE" id="PS50889">
    <property type="entry name" value="S4"/>
    <property type="match status" value="1"/>
</dbReference>
<keyword id="KW-0687">Ribonucleoprotein</keyword>
<keyword id="KW-0689">Ribosomal protein</keyword>
<keyword id="KW-0694">RNA-binding</keyword>
<keyword id="KW-0699">rRNA-binding</keyword>
<evidence type="ECO:0000255" key="1">
    <source>
        <dbReference type="HAMAP-Rule" id="MF_01306"/>
    </source>
</evidence>
<evidence type="ECO:0000256" key="2">
    <source>
        <dbReference type="SAM" id="MobiDB-lite"/>
    </source>
</evidence>
<evidence type="ECO:0000305" key="3"/>
<gene>
    <name evidence="1" type="primary">rpsD</name>
    <name type="ordered locus">CCA_00011</name>
</gene>
<feature type="chain" id="PRO_0000132361" description="Small ribosomal subunit protein uS4">
    <location>
        <begin position="1"/>
        <end position="209"/>
    </location>
</feature>
<feature type="domain" description="S4 RNA-binding" evidence="1">
    <location>
        <begin position="93"/>
        <end position="156"/>
    </location>
</feature>
<feature type="region of interest" description="Disordered" evidence="2">
    <location>
        <begin position="23"/>
        <end position="46"/>
    </location>
</feature>
<accession>Q824X7</accession>
<sequence length="209" mass="23939">MARYCGPKNRIARRFGANIFGRSRNPLLKKPHPPGQHGMQRKKKSDYGLQLEEKQKLKACYGMILEKQLVKAFKEVINKQGSVTKMFLERFECRLDNMVYRMGFAKTIFAAQQLVSHGHVLVNGKKVDRRSFFLRPGMQVSLKEKSRKLQSVQESLENRDEGSLPSYISVDKGNFKGELLVSPEQDQIEAQLPLPVDVSVVCEFLSHRT</sequence>